<gene>
    <name evidence="1" type="primary">mutS2</name>
    <name evidence="1" type="synonym">rqcU</name>
    <name type="ordered locus">CLH_2231</name>
</gene>
<protein>
    <recommendedName>
        <fullName evidence="1">Endonuclease MutS2</fullName>
        <ecNumber evidence="1">3.1.-.-</ecNumber>
    </recommendedName>
    <alternativeName>
        <fullName evidence="1">Ribosome-associated protein quality control-upstream factor</fullName>
        <shortName evidence="1">RQC-upstream factor</shortName>
        <shortName evidence="1">RqcU</shortName>
        <ecNumber evidence="1">3.6.4.-</ecNumber>
    </alternativeName>
</protein>
<reference key="1">
    <citation type="submission" date="2008-05" db="EMBL/GenBank/DDBJ databases">
        <title>Complete genome sequence of Clostridium botulinum E3 str. Alaska E43.</title>
        <authorList>
            <person name="Brinkac L.M."/>
            <person name="Brown J.L."/>
            <person name="Bruce D."/>
            <person name="Detter C."/>
            <person name="Munk C."/>
            <person name="Smith L.A."/>
            <person name="Smith T.J."/>
            <person name="Sutton G."/>
            <person name="Brettin T.S."/>
        </authorList>
    </citation>
    <scope>NUCLEOTIDE SEQUENCE [LARGE SCALE GENOMIC DNA]</scope>
    <source>
        <strain>Alaska E43 / Type E3</strain>
    </source>
</reference>
<name>MUTS2_CLOBA</name>
<dbReference type="EC" id="3.1.-.-" evidence="1"/>
<dbReference type="EC" id="3.6.4.-" evidence="1"/>
<dbReference type="EMBL" id="CP001078">
    <property type="protein sequence ID" value="ACD53455.1"/>
    <property type="molecule type" value="Genomic_DNA"/>
</dbReference>
<dbReference type="RefSeq" id="WP_012451352.1">
    <property type="nucleotide sequence ID" value="NC_010723.1"/>
</dbReference>
<dbReference type="SMR" id="B2V583"/>
<dbReference type="KEGG" id="cbt:CLH_2231"/>
<dbReference type="HOGENOM" id="CLU_011252_2_1_9"/>
<dbReference type="GO" id="GO:0005524">
    <property type="term" value="F:ATP binding"/>
    <property type="evidence" value="ECO:0007669"/>
    <property type="project" value="UniProtKB-UniRule"/>
</dbReference>
<dbReference type="GO" id="GO:0016887">
    <property type="term" value="F:ATP hydrolysis activity"/>
    <property type="evidence" value="ECO:0007669"/>
    <property type="project" value="InterPro"/>
</dbReference>
<dbReference type="GO" id="GO:0140664">
    <property type="term" value="F:ATP-dependent DNA damage sensor activity"/>
    <property type="evidence" value="ECO:0007669"/>
    <property type="project" value="InterPro"/>
</dbReference>
<dbReference type="GO" id="GO:0004519">
    <property type="term" value="F:endonuclease activity"/>
    <property type="evidence" value="ECO:0007669"/>
    <property type="project" value="UniProtKB-UniRule"/>
</dbReference>
<dbReference type="GO" id="GO:0030983">
    <property type="term" value="F:mismatched DNA binding"/>
    <property type="evidence" value="ECO:0007669"/>
    <property type="project" value="InterPro"/>
</dbReference>
<dbReference type="GO" id="GO:0043023">
    <property type="term" value="F:ribosomal large subunit binding"/>
    <property type="evidence" value="ECO:0007669"/>
    <property type="project" value="UniProtKB-UniRule"/>
</dbReference>
<dbReference type="GO" id="GO:0019843">
    <property type="term" value="F:rRNA binding"/>
    <property type="evidence" value="ECO:0007669"/>
    <property type="project" value="UniProtKB-UniRule"/>
</dbReference>
<dbReference type="GO" id="GO:0006298">
    <property type="term" value="P:mismatch repair"/>
    <property type="evidence" value="ECO:0007669"/>
    <property type="project" value="InterPro"/>
</dbReference>
<dbReference type="GO" id="GO:0045910">
    <property type="term" value="P:negative regulation of DNA recombination"/>
    <property type="evidence" value="ECO:0007669"/>
    <property type="project" value="InterPro"/>
</dbReference>
<dbReference type="GO" id="GO:0072344">
    <property type="term" value="P:rescue of stalled ribosome"/>
    <property type="evidence" value="ECO:0007669"/>
    <property type="project" value="UniProtKB-UniRule"/>
</dbReference>
<dbReference type="CDD" id="cd03280">
    <property type="entry name" value="ABC_MutS2"/>
    <property type="match status" value="1"/>
</dbReference>
<dbReference type="CDD" id="cd06503">
    <property type="entry name" value="ATP-synt_Fo_b"/>
    <property type="match status" value="1"/>
</dbReference>
<dbReference type="FunFam" id="3.30.1370.110:FF:000007">
    <property type="entry name" value="Endonuclease MutS2"/>
    <property type="match status" value="1"/>
</dbReference>
<dbReference type="FunFam" id="3.40.50.300:FF:000830">
    <property type="entry name" value="Endonuclease MutS2"/>
    <property type="match status" value="1"/>
</dbReference>
<dbReference type="Gene3D" id="3.30.1370.110">
    <property type="match status" value="1"/>
</dbReference>
<dbReference type="Gene3D" id="3.40.50.300">
    <property type="entry name" value="P-loop containing nucleotide triphosphate hydrolases"/>
    <property type="match status" value="1"/>
</dbReference>
<dbReference type="HAMAP" id="MF_00092">
    <property type="entry name" value="MutS2"/>
    <property type="match status" value="1"/>
</dbReference>
<dbReference type="InterPro" id="IPR000432">
    <property type="entry name" value="DNA_mismatch_repair_MutS_C"/>
</dbReference>
<dbReference type="InterPro" id="IPR007696">
    <property type="entry name" value="DNA_mismatch_repair_MutS_core"/>
</dbReference>
<dbReference type="InterPro" id="IPR036187">
    <property type="entry name" value="DNA_mismatch_repair_MutS_sf"/>
</dbReference>
<dbReference type="InterPro" id="IPR046893">
    <property type="entry name" value="MSSS"/>
</dbReference>
<dbReference type="InterPro" id="IPR045076">
    <property type="entry name" value="MutS"/>
</dbReference>
<dbReference type="InterPro" id="IPR005747">
    <property type="entry name" value="MutS2"/>
</dbReference>
<dbReference type="InterPro" id="IPR027417">
    <property type="entry name" value="P-loop_NTPase"/>
</dbReference>
<dbReference type="InterPro" id="IPR002625">
    <property type="entry name" value="Smr_dom"/>
</dbReference>
<dbReference type="InterPro" id="IPR036063">
    <property type="entry name" value="Smr_dom_sf"/>
</dbReference>
<dbReference type="NCBIfam" id="TIGR01069">
    <property type="entry name" value="mutS2"/>
    <property type="match status" value="1"/>
</dbReference>
<dbReference type="PANTHER" id="PTHR48466:SF2">
    <property type="entry name" value="OS10G0509000 PROTEIN"/>
    <property type="match status" value="1"/>
</dbReference>
<dbReference type="PANTHER" id="PTHR48466">
    <property type="entry name" value="OS10G0509000 PROTEIN-RELATED"/>
    <property type="match status" value="1"/>
</dbReference>
<dbReference type="Pfam" id="PF20297">
    <property type="entry name" value="MSSS"/>
    <property type="match status" value="1"/>
</dbReference>
<dbReference type="Pfam" id="PF00488">
    <property type="entry name" value="MutS_V"/>
    <property type="match status" value="1"/>
</dbReference>
<dbReference type="Pfam" id="PF01713">
    <property type="entry name" value="Smr"/>
    <property type="match status" value="1"/>
</dbReference>
<dbReference type="PIRSF" id="PIRSF005814">
    <property type="entry name" value="MutS_YshD"/>
    <property type="match status" value="1"/>
</dbReference>
<dbReference type="SMART" id="SM00534">
    <property type="entry name" value="MUTSac"/>
    <property type="match status" value="1"/>
</dbReference>
<dbReference type="SMART" id="SM00533">
    <property type="entry name" value="MUTSd"/>
    <property type="match status" value="1"/>
</dbReference>
<dbReference type="SMART" id="SM00463">
    <property type="entry name" value="SMR"/>
    <property type="match status" value="1"/>
</dbReference>
<dbReference type="SUPFAM" id="SSF48334">
    <property type="entry name" value="DNA repair protein MutS, domain III"/>
    <property type="match status" value="1"/>
</dbReference>
<dbReference type="SUPFAM" id="SSF52540">
    <property type="entry name" value="P-loop containing nucleoside triphosphate hydrolases"/>
    <property type="match status" value="1"/>
</dbReference>
<dbReference type="SUPFAM" id="SSF160443">
    <property type="entry name" value="SMR domain-like"/>
    <property type="match status" value="1"/>
</dbReference>
<dbReference type="PROSITE" id="PS50828">
    <property type="entry name" value="SMR"/>
    <property type="match status" value="1"/>
</dbReference>
<proteinExistence type="inferred from homology"/>
<keyword id="KW-0067">ATP-binding</keyword>
<keyword id="KW-0238">DNA-binding</keyword>
<keyword id="KW-0255">Endonuclease</keyword>
<keyword id="KW-0378">Hydrolase</keyword>
<keyword id="KW-0540">Nuclease</keyword>
<keyword id="KW-0547">Nucleotide-binding</keyword>
<keyword id="KW-0694">RNA-binding</keyword>
<keyword id="KW-0699">rRNA-binding</keyword>
<accession>B2V583</accession>
<evidence type="ECO:0000255" key="1">
    <source>
        <dbReference type="HAMAP-Rule" id="MF_00092"/>
    </source>
</evidence>
<comment type="function">
    <text evidence="1">Endonuclease that is involved in the suppression of homologous recombination and thus may have a key role in the control of bacterial genetic diversity.</text>
</comment>
<comment type="function">
    <text evidence="1">Acts as a ribosome collision sensor, splitting the ribosome into its 2 subunits. Detects stalled/collided 70S ribosomes which it binds and splits by an ATP-hydrolysis driven conformational change. Acts upstream of the ribosome quality control system (RQC), a ribosome-associated complex that mediates the extraction of incompletely synthesized nascent chains from stalled ribosomes and their subsequent degradation. Probably generates substrates for RQC.</text>
</comment>
<comment type="subunit">
    <text evidence="1">Homodimer. Binds to stalled ribosomes, contacting rRNA.</text>
</comment>
<comment type="similarity">
    <text evidence="1">Belongs to the DNA mismatch repair MutS family. MutS2 subfamily.</text>
</comment>
<sequence>MNKRSLRVLEFNKVKEMLKKYAYSSSAKKLVDELVPYDNTYEINNRLEESNEALEILMKKGNPPIEGLCDIGDILQRAKKGGTLTPEQLLKVLGMLTATRRMQEFFKREDQEVSFPKLEDLAYILAPINDLEKEIERSILSEDEVSDNASTTLYNIRRSLKEKNSSVREKINSIVRSNSKYLQDSLYTIRGDRYVIPVKAEYKSSVPGLVHDQSSTGATLFIEPMGLVNLNNEIKELMLKEKAEIDRVLSALSLKVKMNAEHCESNFKILTNLDFIFSKGKYACELNAIKPMVRDDGIFNIMSGRHPLIEKDKVVPLDVVLGDEFDTLMITGPNTGGKTVTLKTVGLLHIMALSGLLIPASSNSSVSFFKEVFADIGDEQSIEQSLSTFSSHLTNIVNIMEYDNRQSLILFDELGGGTDPAEGAALAIAIIENLSSKGAKLIATTHYSELKAYALNKERVENASVEFDINTLRPTYRLLIGVPGKSNAFEISKRIGLGKEVIDCAKNYMSKENLEFEGLIRNLQEKSIIAKKDARDAKVIKDEADNLKKKYEQKLERLEKVKDKAYMDAREEAKKIVANAKDEADEILKAMRELEKLGIGSGGRQRLEEERKKLKDSLEEKEKNLYKMKENDGEVLEKVALGMEAFLPSLNQTVVVISMPDNRGEVQVEAGIMKISVKLKDLRKTKQSKVEKVKKKRELKLHFSKVENRIDLRGLDAEEACYRVDKYLDDAYMGNLGEVTIVHGKGTGILRKAINDMLKRHVHVKNYRLGGYGEGGDGATIVELK</sequence>
<organism>
    <name type="scientific">Clostridium botulinum (strain Alaska E43 / Type E3)</name>
    <dbReference type="NCBI Taxonomy" id="508767"/>
    <lineage>
        <taxon>Bacteria</taxon>
        <taxon>Bacillati</taxon>
        <taxon>Bacillota</taxon>
        <taxon>Clostridia</taxon>
        <taxon>Eubacteriales</taxon>
        <taxon>Clostridiaceae</taxon>
        <taxon>Clostridium</taxon>
    </lineage>
</organism>
<feature type="chain" id="PRO_1000093346" description="Endonuclease MutS2">
    <location>
        <begin position="1"/>
        <end position="785"/>
    </location>
</feature>
<feature type="domain" description="Smr" evidence="1">
    <location>
        <begin position="710"/>
        <end position="785"/>
    </location>
</feature>
<feature type="binding site" evidence="1">
    <location>
        <begin position="332"/>
        <end position="339"/>
    </location>
    <ligand>
        <name>ATP</name>
        <dbReference type="ChEBI" id="CHEBI:30616"/>
    </ligand>
</feature>